<dbReference type="EC" id="6.3.4.2" evidence="1"/>
<dbReference type="EMBL" id="AE000516">
    <property type="protein sequence ID" value="AAK46007.1"/>
    <property type="molecule type" value="Genomic_DNA"/>
</dbReference>
<dbReference type="PIR" id="B70503">
    <property type="entry name" value="B70503"/>
</dbReference>
<dbReference type="RefSeq" id="WP_010924427.1">
    <property type="nucleotide sequence ID" value="NC_002755.2"/>
</dbReference>
<dbReference type="SMR" id="P9WHK6"/>
<dbReference type="MEROPS" id="C26.964"/>
<dbReference type="KEGG" id="mtc:MT1738"/>
<dbReference type="HOGENOM" id="CLU_011675_5_0_11"/>
<dbReference type="UniPathway" id="UPA00159">
    <property type="reaction ID" value="UER00277"/>
</dbReference>
<dbReference type="Proteomes" id="UP000001020">
    <property type="component" value="Chromosome"/>
</dbReference>
<dbReference type="GO" id="GO:0005829">
    <property type="term" value="C:cytosol"/>
    <property type="evidence" value="ECO:0007669"/>
    <property type="project" value="TreeGrafter"/>
</dbReference>
<dbReference type="GO" id="GO:0005524">
    <property type="term" value="F:ATP binding"/>
    <property type="evidence" value="ECO:0007669"/>
    <property type="project" value="UniProtKB-KW"/>
</dbReference>
<dbReference type="GO" id="GO:0003883">
    <property type="term" value="F:CTP synthase activity"/>
    <property type="evidence" value="ECO:0007669"/>
    <property type="project" value="UniProtKB-UniRule"/>
</dbReference>
<dbReference type="GO" id="GO:0004359">
    <property type="term" value="F:glutaminase activity"/>
    <property type="evidence" value="ECO:0007669"/>
    <property type="project" value="RHEA"/>
</dbReference>
<dbReference type="GO" id="GO:0042802">
    <property type="term" value="F:identical protein binding"/>
    <property type="evidence" value="ECO:0007669"/>
    <property type="project" value="TreeGrafter"/>
</dbReference>
<dbReference type="GO" id="GO:0046872">
    <property type="term" value="F:metal ion binding"/>
    <property type="evidence" value="ECO:0007669"/>
    <property type="project" value="UniProtKB-KW"/>
</dbReference>
<dbReference type="GO" id="GO:0044210">
    <property type="term" value="P:'de novo' CTP biosynthetic process"/>
    <property type="evidence" value="ECO:0007669"/>
    <property type="project" value="UniProtKB-UniRule"/>
</dbReference>
<dbReference type="GO" id="GO:0019856">
    <property type="term" value="P:pyrimidine nucleobase biosynthetic process"/>
    <property type="evidence" value="ECO:0007669"/>
    <property type="project" value="TreeGrafter"/>
</dbReference>
<dbReference type="CDD" id="cd03113">
    <property type="entry name" value="CTPS_N"/>
    <property type="match status" value="1"/>
</dbReference>
<dbReference type="CDD" id="cd01746">
    <property type="entry name" value="GATase1_CTP_Synthase"/>
    <property type="match status" value="1"/>
</dbReference>
<dbReference type="FunFam" id="3.40.50.300:FF:000009">
    <property type="entry name" value="CTP synthase"/>
    <property type="match status" value="1"/>
</dbReference>
<dbReference type="FunFam" id="3.40.50.880:FF:000002">
    <property type="entry name" value="CTP synthase"/>
    <property type="match status" value="1"/>
</dbReference>
<dbReference type="Gene3D" id="3.40.50.880">
    <property type="match status" value="1"/>
</dbReference>
<dbReference type="Gene3D" id="3.40.50.300">
    <property type="entry name" value="P-loop containing nucleotide triphosphate hydrolases"/>
    <property type="match status" value="1"/>
</dbReference>
<dbReference type="HAMAP" id="MF_01227">
    <property type="entry name" value="PyrG"/>
    <property type="match status" value="1"/>
</dbReference>
<dbReference type="InterPro" id="IPR029062">
    <property type="entry name" value="Class_I_gatase-like"/>
</dbReference>
<dbReference type="InterPro" id="IPR004468">
    <property type="entry name" value="CTP_synthase"/>
</dbReference>
<dbReference type="InterPro" id="IPR017456">
    <property type="entry name" value="CTP_synthase_N"/>
</dbReference>
<dbReference type="InterPro" id="IPR017926">
    <property type="entry name" value="GATASE"/>
</dbReference>
<dbReference type="InterPro" id="IPR033828">
    <property type="entry name" value="GATase1_CTP_Synthase"/>
</dbReference>
<dbReference type="InterPro" id="IPR027417">
    <property type="entry name" value="P-loop_NTPase"/>
</dbReference>
<dbReference type="NCBIfam" id="NF003792">
    <property type="entry name" value="PRK05380.1"/>
    <property type="match status" value="1"/>
</dbReference>
<dbReference type="NCBIfam" id="TIGR00337">
    <property type="entry name" value="PyrG"/>
    <property type="match status" value="1"/>
</dbReference>
<dbReference type="PANTHER" id="PTHR11550">
    <property type="entry name" value="CTP SYNTHASE"/>
    <property type="match status" value="1"/>
</dbReference>
<dbReference type="PANTHER" id="PTHR11550:SF0">
    <property type="entry name" value="CTP SYNTHASE-RELATED"/>
    <property type="match status" value="1"/>
</dbReference>
<dbReference type="Pfam" id="PF06418">
    <property type="entry name" value="CTP_synth_N"/>
    <property type="match status" value="1"/>
</dbReference>
<dbReference type="Pfam" id="PF00117">
    <property type="entry name" value="GATase"/>
    <property type="match status" value="1"/>
</dbReference>
<dbReference type="SUPFAM" id="SSF52317">
    <property type="entry name" value="Class I glutamine amidotransferase-like"/>
    <property type="match status" value="1"/>
</dbReference>
<dbReference type="SUPFAM" id="SSF52540">
    <property type="entry name" value="P-loop containing nucleoside triphosphate hydrolases"/>
    <property type="match status" value="1"/>
</dbReference>
<dbReference type="PROSITE" id="PS51273">
    <property type="entry name" value="GATASE_TYPE_1"/>
    <property type="match status" value="1"/>
</dbReference>
<keyword id="KW-0067">ATP-binding</keyword>
<keyword id="KW-0315">Glutamine amidotransferase</keyword>
<keyword id="KW-0436">Ligase</keyword>
<keyword id="KW-0460">Magnesium</keyword>
<keyword id="KW-0479">Metal-binding</keyword>
<keyword id="KW-0547">Nucleotide-binding</keyword>
<keyword id="KW-0665">Pyrimidine biosynthesis</keyword>
<keyword id="KW-1185">Reference proteome</keyword>
<evidence type="ECO:0000255" key="1">
    <source>
        <dbReference type="HAMAP-Rule" id="MF_01227"/>
    </source>
</evidence>
<evidence type="ECO:0000256" key="2">
    <source>
        <dbReference type="SAM" id="MobiDB-lite"/>
    </source>
</evidence>
<gene>
    <name evidence="1" type="primary">pyrG</name>
    <name type="ordered locus">MT1738</name>
</gene>
<comment type="function">
    <text evidence="1">Catalyzes the ATP-dependent amination of UTP to CTP with either L-glutamine or ammonia as the source of nitrogen. Regulates intracellular CTP levels through interactions with the four ribonucleotide triphosphates.</text>
</comment>
<comment type="catalytic activity">
    <reaction evidence="1">
        <text>UTP + L-glutamine + ATP + H2O = CTP + L-glutamate + ADP + phosphate + 2 H(+)</text>
        <dbReference type="Rhea" id="RHEA:26426"/>
        <dbReference type="ChEBI" id="CHEBI:15377"/>
        <dbReference type="ChEBI" id="CHEBI:15378"/>
        <dbReference type="ChEBI" id="CHEBI:29985"/>
        <dbReference type="ChEBI" id="CHEBI:30616"/>
        <dbReference type="ChEBI" id="CHEBI:37563"/>
        <dbReference type="ChEBI" id="CHEBI:43474"/>
        <dbReference type="ChEBI" id="CHEBI:46398"/>
        <dbReference type="ChEBI" id="CHEBI:58359"/>
        <dbReference type="ChEBI" id="CHEBI:456216"/>
        <dbReference type="EC" id="6.3.4.2"/>
    </reaction>
</comment>
<comment type="catalytic activity">
    <reaction evidence="1">
        <text>L-glutamine + H2O = L-glutamate + NH4(+)</text>
        <dbReference type="Rhea" id="RHEA:15889"/>
        <dbReference type="ChEBI" id="CHEBI:15377"/>
        <dbReference type="ChEBI" id="CHEBI:28938"/>
        <dbReference type="ChEBI" id="CHEBI:29985"/>
        <dbReference type="ChEBI" id="CHEBI:58359"/>
    </reaction>
</comment>
<comment type="catalytic activity">
    <reaction evidence="1">
        <text>UTP + NH4(+) + ATP = CTP + ADP + phosphate + 2 H(+)</text>
        <dbReference type="Rhea" id="RHEA:16597"/>
        <dbReference type="ChEBI" id="CHEBI:15378"/>
        <dbReference type="ChEBI" id="CHEBI:28938"/>
        <dbReference type="ChEBI" id="CHEBI:30616"/>
        <dbReference type="ChEBI" id="CHEBI:37563"/>
        <dbReference type="ChEBI" id="CHEBI:43474"/>
        <dbReference type="ChEBI" id="CHEBI:46398"/>
        <dbReference type="ChEBI" id="CHEBI:456216"/>
    </reaction>
</comment>
<comment type="activity regulation">
    <text evidence="1">Allosterically activated by GTP, when glutamine is the substrate; GTP has no effect on the reaction when ammonia is the substrate. The allosteric effector GTP functions by stabilizing the protein conformation that binds the tetrahedral intermediate(s) formed during glutamine hydrolysis. Inhibited by the product CTP, via allosteric rather than competitive inhibition.</text>
</comment>
<comment type="pathway">
    <text evidence="1">Pyrimidine metabolism; CTP biosynthesis via de novo pathway; CTP from UDP: step 2/2.</text>
</comment>
<comment type="subunit">
    <text evidence="1">Homotetramer.</text>
</comment>
<comment type="miscellaneous">
    <text evidence="1">CTPSs have evolved a hybrid strategy for distinguishing between UTP and CTP. The overlapping regions of the product feedback inhibitory and substrate sites recognize a common feature in both compounds, the triphosphate moiety. To differentiate isosteric substrate and product pyrimidine rings, an additional pocket far from the expected kinase/ligase catalytic site, specifically recognizes the cytosine and ribose portions of the product inhibitor.</text>
</comment>
<comment type="similarity">
    <text evidence="1">Belongs to the CTP synthase family.</text>
</comment>
<sequence>MRKHPQTATKHLFVSGGVASSLGKGLTASSLGQLLTVRGLHVTMQKLDPYLNVDPGTMNPFQHGEVFVTEDGAETDLDVGHYERFLDRNLPGSANVTTGQVYSTVIAKERRGEYLGDTVQVIPHITDEIKRRILAMAQPDADGNRPDVVITEIGGTVGDIESQPFLEAARQVRHYLGREDVFFLHVSLVPYLAPSGELKTKPTQHSVAALRSIGITPDALILRCDRDVPEALKNKIALMCDVDIDGVISTPDAPSIYDIPKVLHREELDAFVVRRLNLPFRDVDWTEWDDLVRRVHEPHETVRIALVGKYVELSDAYLSVAEALRAGGFKHRAKVEICWVASDGCETTSGAAAALGDVHGVLIPGGFGIRGIEGKIGAIAYARARGLPVLGLCLGLQCIVIEAARSVGLTNANSAEFDPDTPDPVIATMPDQEEIVAGEADLGGTMRLGSYPAVLEPDSVVAQAYQTTQVSERHRHRYEVNNAYRDKIAESGLRFSGTSPDGHLVEFVEYPPDRHPFVVGTQAHPELKSRPTRPHPLFVAFVGAAIDYKAGELLPVEIPEIPEHTPNGSSHRDGVGQPLPEPASRG</sequence>
<organism>
    <name type="scientific">Mycobacterium tuberculosis (strain CDC 1551 / Oshkosh)</name>
    <dbReference type="NCBI Taxonomy" id="83331"/>
    <lineage>
        <taxon>Bacteria</taxon>
        <taxon>Bacillati</taxon>
        <taxon>Actinomycetota</taxon>
        <taxon>Actinomycetes</taxon>
        <taxon>Mycobacteriales</taxon>
        <taxon>Mycobacteriaceae</taxon>
        <taxon>Mycobacterium</taxon>
        <taxon>Mycobacterium tuberculosis complex</taxon>
    </lineage>
</organism>
<feature type="chain" id="PRO_0000428168" description="CTP synthase">
    <location>
        <begin position="1"/>
        <end position="586"/>
    </location>
</feature>
<feature type="domain" description="Glutamine amidotransferase type-1" evidence="1">
    <location>
        <begin position="303"/>
        <end position="551"/>
    </location>
</feature>
<feature type="region of interest" description="Amidoligase domain" evidence="1">
    <location>
        <begin position="1"/>
        <end position="278"/>
    </location>
</feature>
<feature type="region of interest" description="Disordered" evidence="2">
    <location>
        <begin position="560"/>
        <end position="586"/>
    </location>
</feature>
<feature type="active site" description="Nucleophile; for glutamine hydrolysis" evidence="1">
    <location>
        <position position="393"/>
    </location>
</feature>
<feature type="active site" evidence="1">
    <location>
        <position position="524"/>
    </location>
</feature>
<feature type="active site" evidence="1">
    <location>
        <position position="526"/>
    </location>
</feature>
<feature type="binding site" evidence="1">
    <location>
        <position position="20"/>
    </location>
    <ligand>
        <name>CTP</name>
        <dbReference type="ChEBI" id="CHEBI:37563"/>
        <note>allosteric inhibitor</note>
    </ligand>
</feature>
<feature type="binding site" evidence="1">
    <location>
        <position position="20"/>
    </location>
    <ligand>
        <name>UTP</name>
        <dbReference type="ChEBI" id="CHEBI:46398"/>
    </ligand>
</feature>
<feature type="binding site" evidence="1">
    <location>
        <begin position="21"/>
        <end position="26"/>
    </location>
    <ligand>
        <name>ATP</name>
        <dbReference type="ChEBI" id="CHEBI:30616"/>
    </ligand>
</feature>
<feature type="binding site" evidence="1">
    <location>
        <position position="78"/>
    </location>
    <ligand>
        <name>ATP</name>
        <dbReference type="ChEBI" id="CHEBI:30616"/>
    </ligand>
</feature>
<feature type="binding site" evidence="1">
    <location>
        <position position="78"/>
    </location>
    <ligand>
        <name>Mg(2+)</name>
        <dbReference type="ChEBI" id="CHEBI:18420"/>
    </ligand>
</feature>
<feature type="binding site" evidence="1">
    <location>
        <position position="152"/>
    </location>
    <ligand>
        <name>Mg(2+)</name>
        <dbReference type="ChEBI" id="CHEBI:18420"/>
    </ligand>
</feature>
<feature type="binding site" evidence="1">
    <location>
        <begin position="159"/>
        <end position="161"/>
    </location>
    <ligand>
        <name>CTP</name>
        <dbReference type="ChEBI" id="CHEBI:37563"/>
        <note>allosteric inhibitor</note>
    </ligand>
</feature>
<feature type="binding site" evidence="1">
    <location>
        <begin position="199"/>
        <end position="204"/>
    </location>
    <ligand>
        <name>CTP</name>
        <dbReference type="ChEBI" id="CHEBI:37563"/>
        <note>allosteric inhibitor</note>
    </ligand>
</feature>
<feature type="binding site" evidence="1">
    <location>
        <begin position="199"/>
        <end position="204"/>
    </location>
    <ligand>
        <name>UTP</name>
        <dbReference type="ChEBI" id="CHEBI:46398"/>
    </ligand>
</feature>
<feature type="binding site" evidence="1">
    <location>
        <position position="235"/>
    </location>
    <ligand>
        <name>CTP</name>
        <dbReference type="ChEBI" id="CHEBI:37563"/>
        <note>allosteric inhibitor</note>
    </ligand>
</feature>
<feature type="binding site" evidence="1">
    <location>
        <position position="235"/>
    </location>
    <ligand>
        <name>UTP</name>
        <dbReference type="ChEBI" id="CHEBI:46398"/>
    </ligand>
</feature>
<feature type="binding site" evidence="1">
    <location>
        <position position="366"/>
    </location>
    <ligand>
        <name>L-glutamine</name>
        <dbReference type="ChEBI" id="CHEBI:58359"/>
    </ligand>
</feature>
<feature type="binding site" evidence="1">
    <location>
        <begin position="394"/>
        <end position="397"/>
    </location>
    <ligand>
        <name>L-glutamine</name>
        <dbReference type="ChEBI" id="CHEBI:58359"/>
    </ligand>
</feature>
<feature type="binding site" evidence="1">
    <location>
        <position position="416"/>
    </location>
    <ligand>
        <name>L-glutamine</name>
        <dbReference type="ChEBI" id="CHEBI:58359"/>
    </ligand>
</feature>
<feature type="binding site" evidence="1">
    <location>
        <position position="477"/>
    </location>
    <ligand>
        <name>L-glutamine</name>
        <dbReference type="ChEBI" id="CHEBI:58359"/>
    </ligand>
</feature>
<reference key="1">
    <citation type="journal article" date="2002" name="J. Bacteriol.">
        <title>Whole-genome comparison of Mycobacterium tuberculosis clinical and laboratory strains.</title>
        <authorList>
            <person name="Fleischmann R.D."/>
            <person name="Alland D."/>
            <person name="Eisen J.A."/>
            <person name="Carpenter L."/>
            <person name="White O."/>
            <person name="Peterson J.D."/>
            <person name="DeBoy R.T."/>
            <person name="Dodson R.J."/>
            <person name="Gwinn M.L."/>
            <person name="Haft D.H."/>
            <person name="Hickey E.K."/>
            <person name="Kolonay J.F."/>
            <person name="Nelson W.C."/>
            <person name="Umayam L.A."/>
            <person name="Ermolaeva M.D."/>
            <person name="Salzberg S.L."/>
            <person name="Delcher A."/>
            <person name="Utterback T.R."/>
            <person name="Weidman J.F."/>
            <person name="Khouri H.M."/>
            <person name="Gill J."/>
            <person name="Mikula A."/>
            <person name="Bishai W."/>
            <person name="Jacobs W.R. Jr."/>
            <person name="Venter J.C."/>
            <person name="Fraser C.M."/>
        </authorList>
    </citation>
    <scope>NUCLEOTIDE SEQUENCE [LARGE SCALE GENOMIC DNA]</scope>
    <source>
        <strain>CDC 1551 / Oshkosh</strain>
    </source>
</reference>
<accession>P9WHK6</accession>
<accession>L0TA54</accession>
<accession>P0A5U2</accession>
<accession>P96351</accession>
<protein>
    <recommendedName>
        <fullName evidence="1">CTP synthase</fullName>
        <ecNumber evidence="1">6.3.4.2</ecNumber>
    </recommendedName>
    <alternativeName>
        <fullName evidence="1">Cytidine 5'-triphosphate synthase</fullName>
    </alternativeName>
    <alternativeName>
        <fullName evidence="1">Cytidine triphosphate synthetase</fullName>
        <shortName evidence="1">CTP synthetase</shortName>
        <shortName evidence="1">CTPS</shortName>
    </alternativeName>
    <alternativeName>
        <fullName evidence="1">UTP--ammonia ligase</fullName>
    </alternativeName>
</protein>
<proteinExistence type="inferred from homology"/>
<name>PYRG_MYCTO</name>